<comment type="function">
    <text evidence="1">Has a post-transcriptional repressor function in flagellum biogenesis. Associates with the 5'-UTR of fljK mRNA and promotes its degradation.</text>
</comment>
<comment type="similarity">
    <text evidence="1">Belongs to the FlbT family.</text>
</comment>
<evidence type="ECO:0000255" key="1">
    <source>
        <dbReference type="HAMAP-Rule" id="MF_00783"/>
    </source>
</evidence>
<feature type="chain" id="PRO_0000217156" description="Probable flagellum biosynthesis repressor protein FlbT">
    <location>
        <begin position="1"/>
        <end position="147"/>
    </location>
</feature>
<reference key="1">
    <citation type="journal article" date="2000" name="DNA Res.">
        <title>Complete genome structure of the nitrogen-fixing symbiotic bacterium Mesorhizobium loti.</title>
        <authorList>
            <person name="Kaneko T."/>
            <person name="Nakamura Y."/>
            <person name="Sato S."/>
            <person name="Asamizu E."/>
            <person name="Kato T."/>
            <person name="Sasamoto S."/>
            <person name="Watanabe A."/>
            <person name="Idesawa K."/>
            <person name="Ishikawa A."/>
            <person name="Kawashima K."/>
            <person name="Kimura T."/>
            <person name="Kishida Y."/>
            <person name="Kiyokawa C."/>
            <person name="Kohara M."/>
            <person name="Matsumoto M."/>
            <person name="Matsuno A."/>
            <person name="Mochizuki Y."/>
            <person name="Nakayama S."/>
            <person name="Nakazaki N."/>
            <person name="Shimpo S."/>
            <person name="Sugimoto M."/>
            <person name="Takeuchi C."/>
            <person name="Yamada M."/>
            <person name="Tabata S."/>
        </authorList>
    </citation>
    <scope>NUCLEOTIDE SEQUENCE [LARGE SCALE GENOMIC DNA]</scope>
    <source>
        <strain>LMG 29417 / CECT 9101 / MAFF 303099</strain>
    </source>
</reference>
<name>FLBT_RHILO</name>
<keyword id="KW-1005">Bacterial flagellum biogenesis</keyword>
<keyword id="KW-0678">Repressor</keyword>
<keyword id="KW-0694">RNA-binding</keyword>
<accession>Q98HB7</accession>
<organism>
    <name type="scientific">Mesorhizobium japonicum (strain LMG 29417 / CECT 9101 / MAFF 303099)</name>
    <name type="common">Mesorhizobium loti (strain MAFF 303099)</name>
    <dbReference type="NCBI Taxonomy" id="266835"/>
    <lineage>
        <taxon>Bacteria</taxon>
        <taxon>Pseudomonadati</taxon>
        <taxon>Pseudomonadota</taxon>
        <taxon>Alphaproteobacteria</taxon>
        <taxon>Hyphomicrobiales</taxon>
        <taxon>Phyllobacteriaceae</taxon>
        <taxon>Mesorhizobium</taxon>
    </lineage>
</organism>
<proteinExistence type="inferred from homology"/>
<sequence length="147" mass="16508">MTNTLKISLKPNEKIYINGAVIRVDRKVTIELMNDVQFLLESHVIQADQASTPLRQLYFIVQVMLINPAGADDAREMFRRSLPLLIASFEDAEICSALKQIDRMVGEDHIYEALKAIRSLYPLERRALGGNDDVPGAPRPLAVGARY</sequence>
<protein>
    <recommendedName>
        <fullName evidence="1">Probable flagellum biosynthesis repressor protein FlbT</fullName>
    </recommendedName>
</protein>
<gene>
    <name evidence="1" type="primary">flbT</name>
    <name type="ordered locus">mlr2941</name>
</gene>
<dbReference type="EMBL" id="BA000012">
    <property type="protein sequence ID" value="BAB49949.1"/>
    <property type="molecule type" value="Genomic_DNA"/>
</dbReference>
<dbReference type="RefSeq" id="WP_010911296.1">
    <property type="nucleotide sequence ID" value="NC_002678.2"/>
</dbReference>
<dbReference type="KEGG" id="mlo:mlr2941"/>
<dbReference type="PATRIC" id="fig|266835.9.peg.2353"/>
<dbReference type="eggNOG" id="COG5443">
    <property type="taxonomic scope" value="Bacteria"/>
</dbReference>
<dbReference type="HOGENOM" id="CLU_130913_1_0_5"/>
<dbReference type="Proteomes" id="UP000000552">
    <property type="component" value="Chromosome"/>
</dbReference>
<dbReference type="GO" id="GO:0048027">
    <property type="term" value="F:mRNA 5'-UTR binding"/>
    <property type="evidence" value="ECO:0007669"/>
    <property type="project" value="UniProtKB-UniRule"/>
</dbReference>
<dbReference type="GO" id="GO:0044781">
    <property type="term" value="P:bacterial-type flagellum organization"/>
    <property type="evidence" value="ECO:0007669"/>
    <property type="project" value="UniProtKB-KW"/>
</dbReference>
<dbReference type="GO" id="GO:0006402">
    <property type="term" value="P:mRNA catabolic process"/>
    <property type="evidence" value="ECO:0007669"/>
    <property type="project" value="InterPro"/>
</dbReference>
<dbReference type="GO" id="GO:1902209">
    <property type="term" value="P:negative regulation of bacterial-type flagellum assembly"/>
    <property type="evidence" value="ECO:0007669"/>
    <property type="project" value="UniProtKB-UniRule"/>
</dbReference>
<dbReference type="HAMAP" id="MF_00783">
    <property type="entry name" value="FlbT"/>
    <property type="match status" value="1"/>
</dbReference>
<dbReference type="InterPro" id="IPR009967">
    <property type="entry name" value="Flagellum_FlbT"/>
</dbReference>
<dbReference type="NCBIfam" id="NF001995">
    <property type="entry name" value="PRK00794.1-1"/>
    <property type="match status" value="1"/>
</dbReference>
<dbReference type="Pfam" id="PF07378">
    <property type="entry name" value="FlbT"/>
    <property type="match status" value="1"/>
</dbReference>
<dbReference type="PIRSF" id="PIRSF009533">
    <property type="entry name" value="FlbT"/>
    <property type="match status" value="1"/>
</dbReference>